<sequence>MIKKDKNELNEMEYLVTQENGTEPPFQNEYWNHFDKGIYVDKISGKPLFTSEEKFESNCGWPSFSKSIDDDEIIELVDKTFGMIRTEVRSEDANSHLGHVFNDGPKESGGLRYCINSAAIQFIPYDKLEELGYGDLIPHFEK</sequence>
<reference key="1">
    <citation type="journal article" date="2005" name="J. Bacteriol.">
        <title>Whole-genome sequencing of Staphylococcus haemolyticus uncovers the extreme plasticity of its genome and the evolution of human-colonizing staphylococcal species.</title>
        <authorList>
            <person name="Takeuchi F."/>
            <person name="Watanabe S."/>
            <person name="Baba T."/>
            <person name="Yuzawa H."/>
            <person name="Ito T."/>
            <person name="Morimoto Y."/>
            <person name="Kuroda M."/>
            <person name="Cui L."/>
            <person name="Takahashi M."/>
            <person name="Ankai A."/>
            <person name="Baba S."/>
            <person name="Fukui S."/>
            <person name="Lee J.C."/>
            <person name="Hiramatsu K."/>
        </authorList>
    </citation>
    <scope>NUCLEOTIDE SEQUENCE [LARGE SCALE GENOMIC DNA]</scope>
    <source>
        <strain>JCSC1435</strain>
    </source>
</reference>
<dbReference type="EC" id="1.8.4.12" evidence="1"/>
<dbReference type="EMBL" id="AP006716">
    <property type="protein sequence ID" value="BAE04792.1"/>
    <property type="molecule type" value="Genomic_DNA"/>
</dbReference>
<dbReference type="RefSeq" id="WP_011275778.1">
    <property type="nucleotide sequence ID" value="NC_007168.1"/>
</dbReference>
<dbReference type="SMR" id="Q4L6D3"/>
<dbReference type="GeneID" id="93780878"/>
<dbReference type="KEGG" id="sha:SH1483"/>
<dbReference type="eggNOG" id="COG0229">
    <property type="taxonomic scope" value="Bacteria"/>
</dbReference>
<dbReference type="HOGENOM" id="CLU_031040_8_5_9"/>
<dbReference type="OrthoDB" id="4174719at2"/>
<dbReference type="Proteomes" id="UP000000543">
    <property type="component" value="Chromosome"/>
</dbReference>
<dbReference type="GO" id="GO:0005737">
    <property type="term" value="C:cytoplasm"/>
    <property type="evidence" value="ECO:0007669"/>
    <property type="project" value="TreeGrafter"/>
</dbReference>
<dbReference type="GO" id="GO:0033743">
    <property type="term" value="F:peptide-methionine (R)-S-oxide reductase activity"/>
    <property type="evidence" value="ECO:0007669"/>
    <property type="project" value="UniProtKB-UniRule"/>
</dbReference>
<dbReference type="GO" id="GO:0030091">
    <property type="term" value="P:protein repair"/>
    <property type="evidence" value="ECO:0007669"/>
    <property type="project" value="InterPro"/>
</dbReference>
<dbReference type="GO" id="GO:0006979">
    <property type="term" value="P:response to oxidative stress"/>
    <property type="evidence" value="ECO:0007669"/>
    <property type="project" value="InterPro"/>
</dbReference>
<dbReference type="FunFam" id="2.170.150.20:FF:000003">
    <property type="entry name" value="Peptide methionine sulfoxide reductase MsrB"/>
    <property type="match status" value="1"/>
</dbReference>
<dbReference type="Gene3D" id="2.170.150.20">
    <property type="entry name" value="Peptide methionine sulfoxide reductase"/>
    <property type="match status" value="1"/>
</dbReference>
<dbReference type="HAMAP" id="MF_01400">
    <property type="entry name" value="MsrB"/>
    <property type="match status" value="1"/>
</dbReference>
<dbReference type="InterPro" id="IPR028427">
    <property type="entry name" value="Met_Sox_Rdtase_MsrB"/>
</dbReference>
<dbReference type="InterPro" id="IPR002579">
    <property type="entry name" value="Met_Sox_Rdtase_MsrB_dom"/>
</dbReference>
<dbReference type="InterPro" id="IPR011057">
    <property type="entry name" value="Mss4-like_sf"/>
</dbReference>
<dbReference type="NCBIfam" id="TIGR00357">
    <property type="entry name" value="peptide-methionine (R)-S-oxide reductase MsrB"/>
    <property type="match status" value="1"/>
</dbReference>
<dbReference type="PANTHER" id="PTHR10173">
    <property type="entry name" value="METHIONINE SULFOXIDE REDUCTASE"/>
    <property type="match status" value="1"/>
</dbReference>
<dbReference type="PANTHER" id="PTHR10173:SF59">
    <property type="entry name" value="PEPTIDE METHIONINE SULFOXIDE REDUCTASE MSRA_MSRB"/>
    <property type="match status" value="1"/>
</dbReference>
<dbReference type="Pfam" id="PF01641">
    <property type="entry name" value="SelR"/>
    <property type="match status" value="1"/>
</dbReference>
<dbReference type="SUPFAM" id="SSF51316">
    <property type="entry name" value="Mss4-like"/>
    <property type="match status" value="1"/>
</dbReference>
<dbReference type="PROSITE" id="PS51790">
    <property type="entry name" value="MSRB"/>
    <property type="match status" value="1"/>
</dbReference>
<proteinExistence type="inferred from homology"/>
<name>MSRB_STAHJ</name>
<evidence type="ECO:0000255" key="1">
    <source>
        <dbReference type="HAMAP-Rule" id="MF_01400"/>
    </source>
</evidence>
<evidence type="ECO:0000255" key="2">
    <source>
        <dbReference type="PROSITE-ProRule" id="PRU01126"/>
    </source>
</evidence>
<organism>
    <name type="scientific">Staphylococcus haemolyticus (strain JCSC1435)</name>
    <dbReference type="NCBI Taxonomy" id="279808"/>
    <lineage>
        <taxon>Bacteria</taxon>
        <taxon>Bacillati</taxon>
        <taxon>Bacillota</taxon>
        <taxon>Bacilli</taxon>
        <taxon>Bacillales</taxon>
        <taxon>Staphylococcaceae</taxon>
        <taxon>Staphylococcus</taxon>
    </lineage>
</organism>
<feature type="chain" id="PRO_0000140303" description="Peptide methionine sulfoxide reductase MsrB">
    <location>
        <begin position="1"/>
        <end position="142"/>
    </location>
</feature>
<feature type="domain" description="MsrB" evidence="2">
    <location>
        <begin position="2"/>
        <end position="125"/>
    </location>
</feature>
<feature type="active site" description="Nucleophile" evidence="2">
    <location>
        <position position="114"/>
    </location>
</feature>
<accession>Q4L6D3</accession>
<gene>
    <name evidence="1" type="primary">msrB</name>
    <name type="ordered locus">SH1483</name>
</gene>
<comment type="catalytic activity">
    <reaction evidence="1">
        <text>L-methionyl-[protein] + [thioredoxin]-disulfide + H2O = L-methionyl-(R)-S-oxide-[protein] + [thioredoxin]-dithiol</text>
        <dbReference type="Rhea" id="RHEA:24164"/>
        <dbReference type="Rhea" id="RHEA-COMP:10698"/>
        <dbReference type="Rhea" id="RHEA-COMP:10700"/>
        <dbReference type="Rhea" id="RHEA-COMP:12313"/>
        <dbReference type="Rhea" id="RHEA-COMP:12314"/>
        <dbReference type="ChEBI" id="CHEBI:15377"/>
        <dbReference type="ChEBI" id="CHEBI:16044"/>
        <dbReference type="ChEBI" id="CHEBI:29950"/>
        <dbReference type="ChEBI" id="CHEBI:45764"/>
        <dbReference type="ChEBI" id="CHEBI:50058"/>
        <dbReference type="EC" id="1.8.4.12"/>
    </reaction>
</comment>
<comment type="similarity">
    <text evidence="1">Belongs to the MsrB Met sulfoxide reductase family.</text>
</comment>
<keyword id="KW-0560">Oxidoreductase</keyword>
<protein>
    <recommendedName>
        <fullName evidence="1">Peptide methionine sulfoxide reductase MsrB</fullName>
        <ecNumber evidence="1">1.8.4.12</ecNumber>
    </recommendedName>
    <alternativeName>
        <fullName evidence="1">Peptide-methionine (R)-S-oxide reductase</fullName>
    </alternativeName>
</protein>